<reference key="1">
    <citation type="journal article" date="2006" name="J. Bacteriol.">
        <title>Genome sequence of Aeromonas hydrophila ATCC 7966T: jack of all trades.</title>
        <authorList>
            <person name="Seshadri R."/>
            <person name="Joseph S.W."/>
            <person name="Chopra A.K."/>
            <person name="Sha J."/>
            <person name="Shaw J."/>
            <person name="Graf J."/>
            <person name="Haft D.H."/>
            <person name="Wu M."/>
            <person name="Ren Q."/>
            <person name="Rosovitz M.J."/>
            <person name="Madupu R."/>
            <person name="Tallon L."/>
            <person name="Kim M."/>
            <person name="Jin S."/>
            <person name="Vuong H."/>
            <person name="Stine O.C."/>
            <person name="Ali A."/>
            <person name="Horneman A.J."/>
            <person name="Heidelberg J.F."/>
        </authorList>
    </citation>
    <scope>NUCLEOTIDE SEQUENCE [LARGE SCALE GENOMIC DNA]</scope>
    <source>
        <strain>ATCC 7966 / DSM 30187 / BCRC 13018 / CCUG 14551 / JCM 1027 / KCTC 2358 / NCIMB 9240 / NCTC 8049</strain>
    </source>
</reference>
<comment type="function">
    <text evidence="1">Catalyzes the hydrolysis of N(2)-succinylarginine into N(2)-succinylornithine, ammonia and CO(2).</text>
</comment>
<comment type="catalytic activity">
    <reaction evidence="1">
        <text>N(2)-succinyl-L-arginine + 2 H2O + 2 H(+) = N(2)-succinyl-L-ornithine + 2 NH4(+) + CO2</text>
        <dbReference type="Rhea" id="RHEA:19533"/>
        <dbReference type="ChEBI" id="CHEBI:15377"/>
        <dbReference type="ChEBI" id="CHEBI:15378"/>
        <dbReference type="ChEBI" id="CHEBI:16526"/>
        <dbReference type="ChEBI" id="CHEBI:28938"/>
        <dbReference type="ChEBI" id="CHEBI:58241"/>
        <dbReference type="ChEBI" id="CHEBI:58514"/>
        <dbReference type="EC" id="3.5.3.23"/>
    </reaction>
</comment>
<comment type="pathway">
    <text evidence="1">Amino-acid degradation; L-arginine degradation via AST pathway; L-glutamate and succinate from L-arginine: step 2/5.</text>
</comment>
<comment type="subunit">
    <text evidence="1">Homodimer.</text>
</comment>
<comment type="similarity">
    <text evidence="1">Belongs to the succinylarginine dihydrolase family.</text>
</comment>
<accession>A0KMV4</accession>
<evidence type="ECO:0000255" key="1">
    <source>
        <dbReference type="HAMAP-Rule" id="MF_01172"/>
    </source>
</evidence>
<keyword id="KW-0056">Arginine metabolism</keyword>
<keyword id="KW-0378">Hydrolase</keyword>
<keyword id="KW-1185">Reference proteome</keyword>
<proteinExistence type="inferred from homology"/>
<protein>
    <recommendedName>
        <fullName evidence="1">N-succinylarginine dihydrolase</fullName>
        <ecNumber evidence="1">3.5.3.23</ecNumber>
    </recommendedName>
</protein>
<organism>
    <name type="scientific">Aeromonas hydrophila subsp. hydrophila (strain ATCC 7966 / DSM 30187 / BCRC 13018 / CCUG 14551 / JCM 1027 / KCTC 2358 / NCIMB 9240 / NCTC 8049)</name>
    <dbReference type="NCBI Taxonomy" id="380703"/>
    <lineage>
        <taxon>Bacteria</taxon>
        <taxon>Pseudomonadati</taxon>
        <taxon>Pseudomonadota</taxon>
        <taxon>Gammaproteobacteria</taxon>
        <taxon>Aeromonadales</taxon>
        <taxon>Aeromonadaceae</taxon>
        <taxon>Aeromonas</taxon>
    </lineage>
</organism>
<gene>
    <name evidence="1" type="primary">astB</name>
    <name type="ordered locus">AHA_3105</name>
</gene>
<feature type="chain" id="PRO_1000065713" description="N-succinylarginine dihydrolase">
    <location>
        <begin position="1"/>
        <end position="445"/>
    </location>
</feature>
<feature type="active site" evidence="1">
    <location>
        <position position="174"/>
    </location>
</feature>
<feature type="active site" evidence="1">
    <location>
        <position position="250"/>
    </location>
</feature>
<feature type="active site" description="Nucleophile" evidence="1">
    <location>
        <position position="369"/>
    </location>
</feature>
<feature type="binding site" evidence="1">
    <location>
        <begin position="19"/>
        <end position="28"/>
    </location>
    <ligand>
        <name>substrate</name>
    </ligand>
</feature>
<feature type="binding site" evidence="1">
    <location>
        <position position="110"/>
    </location>
    <ligand>
        <name>substrate</name>
    </ligand>
</feature>
<feature type="binding site" evidence="1">
    <location>
        <begin position="137"/>
        <end position="138"/>
    </location>
    <ligand>
        <name>substrate</name>
    </ligand>
</feature>
<feature type="binding site" evidence="1">
    <location>
        <position position="214"/>
    </location>
    <ligand>
        <name>substrate</name>
    </ligand>
</feature>
<feature type="binding site" evidence="1">
    <location>
        <position position="252"/>
    </location>
    <ligand>
        <name>substrate</name>
    </ligand>
</feature>
<feature type="binding site" evidence="1">
    <location>
        <position position="363"/>
    </location>
    <ligand>
        <name>substrate</name>
    </ligand>
</feature>
<sequence length="445" mass="48686">MKHFEVNFDGLVGPTHNYAGLSYGNVASQNNAKEASNPKEAAKQGLRKMKALTELGMTQGVLAPQERPDLATLRRLGFTGNDASVLAQAAKQAPAVLAACYSASSMWTANAATVSPSADTQDGRIHFTPANLTNKFHRSLEPEVTGRILRAVFNNDRHFYHHQHLPENDHFGDEGAANHTRLCRAYGESGVELFVYGRSAFDVSQPAPKRYPARQTLEASQAIARLHGLGDESAVFIQQNPDVIDQGVFHNDVIAVGNQNVLFFHQQAFLNTASALAEVRTKFGDGELHFIEVPTAEVSVQDAVKSYLFNTQILTLPSGEMAIIAPTECRDNPAVSAYLTKLVTLGTPIKGVHYMDVKQSMRNGGGPACLRLRVAMNDTELAAVNPACLITDSQFARLDGWVDRHYRDSLALDDLRDPALVMESRTALDELTQILKLGSVYPFQR</sequence>
<name>ASTB_AERHH</name>
<dbReference type="EC" id="3.5.3.23" evidence="1"/>
<dbReference type="EMBL" id="CP000462">
    <property type="protein sequence ID" value="ABK38175.1"/>
    <property type="molecule type" value="Genomic_DNA"/>
</dbReference>
<dbReference type="RefSeq" id="WP_011706894.1">
    <property type="nucleotide sequence ID" value="NC_008570.1"/>
</dbReference>
<dbReference type="RefSeq" id="YP_857605.1">
    <property type="nucleotide sequence ID" value="NC_008570.1"/>
</dbReference>
<dbReference type="SMR" id="A0KMV4"/>
<dbReference type="STRING" id="380703.AHA_3105"/>
<dbReference type="EnsemblBacteria" id="ABK38175">
    <property type="protein sequence ID" value="ABK38175"/>
    <property type="gene ID" value="AHA_3105"/>
</dbReference>
<dbReference type="GeneID" id="4489032"/>
<dbReference type="KEGG" id="aha:AHA_3105"/>
<dbReference type="PATRIC" id="fig|380703.7.peg.3104"/>
<dbReference type="eggNOG" id="COG3724">
    <property type="taxonomic scope" value="Bacteria"/>
</dbReference>
<dbReference type="HOGENOM" id="CLU_053835_0_0_6"/>
<dbReference type="OrthoDB" id="248552at2"/>
<dbReference type="UniPathway" id="UPA00185">
    <property type="reaction ID" value="UER00280"/>
</dbReference>
<dbReference type="Proteomes" id="UP000000756">
    <property type="component" value="Chromosome"/>
</dbReference>
<dbReference type="GO" id="GO:0009015">
    <property type="term" value="F:N-succinylarginine dihydrolase activity"/>
    <property type="evidence" value="ECO:0007669"/>
    <property type="project" value="UniProtKB-UniRule"/>
</dbReference>
<dbReference type="GO" id="GO:0019544">
    <property type="term" value="P:arginine catabolic process to glutamate"/>
    <property type="evidence" value="ECO:0007669"/>
    <property type="project" value="UniProtKB-UniRule"/>
</dbReference>
<dbReference type="GO" id="GO:0019545">
    <property type="term" value="P:arginine catabolic process to succinate"/>
    <property type="evidence" value="ECO:0007669"/>
    <property type="project" value="UniProtKB-UniRule"/>
</dbReference>
<dbReference type="Gene3D" id="3.75.10.20">
    <property type="entry name" value="Succinylarginine dihydrolase"/>
    <property type="match status" value="1"/>
</dbReference>
<dbReference type="HAMAP" id="MF_01172">
    <property type="entry name" value="AstB"/>
    <property type="match status" value="1"/>
</dbReference>
<dbReference type="InterPro" id="IPR037031">
    <property type="entry name" value="AstB_sf"/>
</dbReference>
<dbReference type="InterPro" id="IPR007079">
    <property type="entry name" value="SuccinylArg_d-Hdrlase_AstB"/>
</dbReference>
<dbReference type="NCBIfam" id="TIGR03241">
    <property type="entry name" value="arg_catab_astB"/>
    <property type="match status" value="1"/>
</dbReference>
<dbReference type="NCBIfam" id="NF009789">
    <property type="entry name" value="PRK13281.1"/>
    <property type="match status" value="1"/>
</dbReference>
<dbReference type="PANTHER" id="PTHR30420">
    <property type="entry name" value="N-SUCCINYLARGININE DIHYDROLASE"/>
    <property type="match status" value="1"/>
</dbReference>
<dbReference type="PANTHER" id="PTHR30420:SF2">
    <property type="entry name" value="N-SUCCINYLARGININE DIHYDROLASE"/>
    <property type="match status" value="1"/>
</dbReference>
<dbReference type="Pfam" id="PF04996">
    <property type="entry name" value="AstB"/>
    <property type="match status" value="1"/>
</dbReference>
<dbReference type="SUPFAM" id="SSF55909">
    <property type="entry name" value="Pentein"/>
    <property type="match status" value="1"/>
</dbReference>